<organism>
    <name type="scientific">Streptococcus thermophilus (strain ATCC BAA-491 / LMD-9)</name>
    <dbReference type="NCBI Taxonomy" id="322159"/>
    <lineage>
        <taxon>Bacteria</taxon>
        <taxon>Bacillati</taxon>
        <taxon>Bacillota</taxon>
        <taxon>Bacilli</taxon>
        <taxon>Lactobacillales</taxon>
        <taxon>Streptococcaceae</taxon>
        <taxon>Streptococcus</taxon>
    </lineage>
</organism>
<accession>Q03M13</accession>
<dbReference type="EMBL" id="CP000419">
    <property type="protein sequence ID" value="ABJ65759.1"/>
    <property type="molecule type" value="Genomic_DNA"/>
</dbReference>
<dbReference type="RefSeq" id="WP_002944188.1">
    <property type="nucleotide sequence ID" value="NZ_CP086001.1"/>
</dbReference>
<dbReference type="SMR" id="Q03M13"/>
<dbReference type="KEGG" id="ste:STER_0477"/>
<dbReference type="HOGENOM" id="CLU_177534_1_0_9"/>
<dbReference type="Gene3D" id="1.10.150.260">
    <property type="entry name" value="YozE SAM-like"/>
    <property type="match status" value="1"/>
</dbReference>
<dbReference type="HAMAP" id="MF_01538">
    <property type="entry name" value="UPF0346"/>
    <property type="match status" value="1"/>
</dbReference>
<dbReference type="InterPro" id="IPR010673">
    <property type="entry name" value="UPF0346"/>
</dbReference>
<dbReference type="InterPro" id="IPR023089">
    <property type="entry name" value="YozE_SAM-like"/>
</dbReference>
<dbReference type="InterPro" id="IPR036806">
    <property type="entry name" value="YozE_SAM-like_sf"/>
</dbReference>
<dbReference type="NCBIfam" id="NF010193">
    <property type="entry name" value="PRK13672.1"/>
    <property type="match status" value="1"/>
</dbReference>
<dbReference type="Pfam" id="PF06855">
    <property type="entry name" value="YozE_SAM_like"/>
    <property type="match status" value="1"/>
</dbReference>
<dbReference type="PIRSF" id="PIRSF037262">
    <property type="entry name" value="UCP037262"/>
    <property type="match status" value="1"/>
</dbReference>
<dbReference type="SUPFAM" id="SSF140652">
    <property type="entry name" value="YozE-like"/>
    <property type="match status" value="1"/>
</dbReference>
<protein>
    <recommendedName>
        <fullName evidence="1">UPF0346 protein STER_0477</fullName>
    </recommendedName>
</protein>
<name>Y477_STRTD</name>
<sequence length="71" mass="8448">MRKSFYTWLMAQRNPKSNEPVAILADLAFEDSTFPKHTDDFEEVSRYLEDHASFSFNLGQFDQIWEDYLAH</sequence>
<reference key="1">
    <citation type="journal article" date="2006" name="Proc. Natl. Acad. Sci. U.S.A.">
        <title>Comparative genomics of the lactic acid bacteria.</title>
        <authorList>
            <person name="Makarova K.S."/>
            <person name="Slesarev A."/>
            <person name="Wolf Y.I."/>
            <person name="Sorokin A."/>
            <person name="Mirkin B."/>
            <person name="Koonin E.V."/>
            <person name="Pavlov A."/>
            <person name="Pavlova N."/>
            <person name="Karamychev V."/>
            <person name="Polouchine N."/>
            <person name="Shakhova V."/>
            <person name="Grigoriev I."/>
            <person name="Lou Y."/>
            <person name="Rohksar D."/>
            <person name="Lucas S."/>
            <person name="Huang K."/>
            <person name="Goodstein D.M."/>
            <person name="Hawkins T."/>
            <person name="Plengvidhya V."/>
            <person name="Welker D."/>
            <person name="Hughes J."/>
            <person name="Goh Y."/>
            <person name="Benson A."/>
            <person name="Baldwin K."/>
            <person name="Lee J.-H."/>
            <person name="Diaz-Muniz I."/>
            <person name="Dosti B."/>
            <person name="Smeianov V."/>
            <person name="Wechter W."/>
            <person name="Barabote R."/>
            <person name="Lorca G."/>
            <person name="Altermann E."/>
            <person name="Barrangou R."/>
            <person name="Ganesan B."/>
            <person name="Xie Y."/>
            <person name="Rawsthorne H."/>
            <person name="Tamir D."/>
            <person name="Parker C."/>
            <person name="Breidt F."/>
            <person name="Broadbent J.R."/>
            <person name="Hutkins R."/>
            <person name="O'Sullivan D."/>
            <person name="Steele J."/>
            <person name="Unlu G."/>
            <person name="Saier M.H. Jr."/>
            <person name="Klaenhammer T."/>
            <person name="Richardson P."/>
            <person name="Kozyavkin S."/>
            <person name="Weimer B.C."/>
            <person name="Mills D.A."/>
        </authorList>
    </citation>
    <scope>NUCLEOTIDE SEQUENCE [LARGE SCALE GENOMIC DNA]</scope>
    <source>
        <strain>ATCC BAA-491 / LMD-9</strain>
    </source>
</reference>
<feature type="chain" id="PRO_0000298762" description="UPF0346 protein STER_0477">
    <location>
        <begin position="1"/>
        <end position="71"/>
    </location>
</feature>
<evidence type="ECO:0000255" key="1">
    <source>
        <dbReference type="HAMAP-Rule" id="MF_01538"/>
    </source>
</evidence>
<proteinExistence type="inferred from homology"/>
<gene>
    <name type="ordered locus">STER_0477</name>
</gene>
<comment type="similarity">
    <text evidence="1">Belongs to the UPF0346 family.</text>
</comment>